<protein>
    <recommendedName>
        <fullName>Type 1 phosphatases regulator YPI2</fullName>
    </recommendedName>
</protein>
<evidence type="ECO:0000250" key="1"/>
<evidence type="ECO:0000256" key="2">
    <source>
        <dbReference type="SAM" id="MobiDB-lite"/>
    </source>
</evidence>
<evidence type="ECO:0000305" key="3"/>
<organism>
    <name type="scientific">Vanderwaltozyma polyspora (strain ATCC 22028 / DSM 70294 / BCRC 21397 / CBS 2163 / NBRC 10782 / NRRL Y-8283 / UCD 57-17)</name>
    <name type="common">Kluyveromyces polysporus</name>
    <dbReference type="NCBI Taxonomy" id="436907"/>
    <lineage>
        <taxon>Eukaryota</taxon>
        <taxon>Fungi</taxon>
        <taxon>Dikarya</taxon>
        <taxon>Ascomycota</taxon>
        <taxon>Saccharomycotina</taxon>
        <taxon>Saccharomycetes</taxon>
        <taxon>Saccharomycetales</taxon>
        <taxon>Saccharomycetaceae</taxon>
        <taxon>Vanderwaltozyma</taxon>
    </lineage>
</organism>
<proteinExistence type="inferred from homology"/>
<comment type="function">
    <text evidence="1">Regulator of type 1 phosphatases which maintains protein phosphatase activity under strict control.</text>
</comment>
<comment type="subcellular location">
    <subcellularLocation>
        <location evidence="1">Nucleus</location>
    </subcellularLocation>
</comment>
<comment type="similarity">
    <text evidence="3">Belongs to the YPI1 family.</text>
</comment>
<dbReference type="EMBL" id="DS480403">
    <property type="protein sequence ID" value="EDO17512.1"/>
    <property type="molecule type" value="Genomic_DNA"/>
</dbReference>
<dbReference type="RefSeq" id="XP_001645370.1">
    <property type="nucleotide sequence ID" value="XM_001645320.1"/>
</dbReference>
<dbReference type="FunCoup" id="A7TJT3">
    <property type="interactions" value="179"/>
</dbReference>
<dbReference type="STRING" id="436907.A7TJT3"/>
<dbReference type="GeneID" id="5545730"/>
<dbReference type="KEGG" id="vpo:Kpol_1058p49"/>
<dbReference type="eggNOG" id="KOG4102">
    <property type="taxonomic scope" value="Eukaryota"/>
</dbReference>
<dbReference type="HOGENOM" id="CLU_2348265_0_0_1"/>
<dbReference type="InParanoid" id="A7TJT3"/>
<dbReference type="OrthoDB" id="307488at2759"/>
<dbReference type="PhylomeDB" id="A7TJT3"/>
<dbReference type="Proteomes" id="UP000000267">
    <property type="component" value="Unassembled WGS sequence"/>
</dbReference>
<dbReference type="GO" id="GO:0005634">
    <property type="term" value="C:nucleus"/>
    <property type="evidence" value="ECO:0007669"/>
    <property type="project" value="UniProtKB-SubCell"/>
</dbReference>
<sequence>MNKKKTKICCIYHPQDEDEEGCTSDHQHDELPESSSSSSSESENDKDLGFDERRKRRVERRRRKLRDNTDSAPNAYEVQPDYSEHRKKMMEKKSNNT</sequence>
<name>YPI2_VANPO</name>
<accession>A7TJT3</accession>
<reference key="1">
    <citation type="journal article" date="2007" name="Proc. Natl. Acad. Sci. U.S.A.">
        <title>Independent sorting-out of thousands of duplicated gene pairs in two yeast species descended from a whole-genome duplication.</title>
        <authorList>
            <person name="Scannell D.R."/>
            <person name="Frank A.C."/>
            <person name="Conant G.C."/>
            <person name="Byrne K.P."/>
            <person name="Woolfit M."/>
            <person name="Wolfe K.H."/>
        </authorList>
    </citation>
    <scope>NUCLEOTIDE SEQUENCE [LARGE SCALE GENOMIC DNA]</scope>
    <source>
        <strain>ATCC 22028 / DSM 70294 / BCRC 21397 / CBS 2163 / NBRC 10782 / NRRL Y-8283 / UCD 57-17</strain>
    </source>
</reference>
<feature type="chain" id="PRO_0000333490" description="Type 1 phosphatases regulator YPI2">
    <location>
        <begin position="1"/>
        <end position="97"/>
    </location>
</feature>
<feature type="region of interest" description="Disordered" evidence="2">
    <location>
        <begin position="1"/>
        <end position="97"/>
    </location>
</feature>
<feature type="compositionally biased region" description="Basic and acidic residues" evidence="2">
    <location>
        <begin position="43"/>
        <end position="53"/>
    </location>
</feature>
<feature type="compositionally biased region" description="Basic residues" evidence="2">
    <location>
        <begin position="54"/>
        <end position="65"/>
    </location>
</feature>
<keyword id="KW-0539">Nucleus</keyword>
<keyword id="KW-1185">Reference proteome</keyword>
<gene>
    <name type="primary">YPI2</name>
    <name type="ORF">Kpol_1058p49</name>
</gene>